<accession>Q6TXG9</accession>
<sequence length="251" mass="28729">MASAPSDIPENAFRLAKASGRCQSMMSQMKDETKCMGAVFSGYPTALWLEYEVSPQPMSGTLKERLKKARASSQPFCSVVKRIKVENEENDQTLSEPGESSKEENCSKAQESLENKDNEPEKESSEDKNTSESKSLDTGSSSVLQKDSTEKTIKQTLKEEKAKLTRQVQEKEDLLRRLKLVKMYRIKNDVTELEDLIKKWRRCGQRLLCELQSIMSEDEDEKLTLTELIDYYGIDDKLLHYNRTEEEFTGV</sequence>
<gene>
    <name type="primary">Sfr1</name>
    <name type="synonym">Mei5</name>
    <name type="synonym">Meir5</name>
</gene>
<reference key="1">
    <citation type="submission" date="2003-09" db="EMBL/GenBank/DDBJ databases">
        <title>Liver regeneration after PH.</title>
        <authorList>
            <person name="Xu C.S."/>
            <person name="Chang C.F."/>
            <person name="Han H.P."/>
            <person name="Wang G.P."/>
            <person name="Chai L.Q."/>
            <person name="Yuan J.Y."/>
            <person name="Yang K.J."/>
            <person name="Zhao L.F."/>
            <person name="Ma H."/>
            <person name="Wang L."/>
            <person name="Wang S.F."/>
            <person name="Xing X.K."/>
            <person name="Shen G.M."/>
            <person name="Shi J.B."/>
            <person name="Rahman S."/>
            <person name="Wang Q.N."/>
            <person name="Zhang J.B."/>
        </authorList>
    </citation>
    <scope>NUCLEOTIDE SEQUENCE [LARGE SCALE MRNA]</scope>
    <source>
        <strain>Sprague-Dawley</strain>
        <tissue>Liver</tissue>
    </source>
</reference>
<dbReference type="EMBL" id="AY383685">
    <property type="protein sequence ID" value="AAQ96243.1"/>
    <property type="molecule type" value="mRNA"/>
</dbReference>
<dbReference type="SMR" id="Q6TXG9"/>
<dbReference type="FunCoup" id="Q6TXG9">
    <property type="interactions" value="1850"/>
</dbReference>
<dbReference type="STRING" id="10116.ENSRNOP00000016881"/>
<dbReference type="iPTMnet" id="Q6TXG9"/>
<dbReference type="PhosphoSitePlus" id="Q6TXG9"/>
<dbReference type="jPOST" id="Q6TXG9"/>
<dbReference type="PaxDb" id="10116-ENSRNOP00000016881"/>
<dbReference type="Ensembl" id="ENSRNOT00000088962.2">
    <property type="protein sequence ID" value="ENSRNOP00000068947.1"/>
    <property type="gene ID" value="ENSRNOG00000012641.6"/>
</dbReference>
<dbReference type="UCSC" id="RGD:1305481">
    <property type="organism name" value="rat"/>
</dbReference>
<dbReference type="AGR" id="RGD:1305481"/>
<dbReference type="RGD" id="1305481">
    <property type="gene designation" value="Sfr1"/>
</dbReference>
<dbReference type="eggNOG" id="ENOG502S1QX">
    <property type="taxonomic scope" value="Eukaryota"/>
</dbReference>
<dbReference type="GeneTree" id="ENSGT00390000018550"/>
<dbReference type="HOGENOM" id="CLU_075586_1_0_1"/>
<dbReference type="InParanoid" id="Q6TXG9"/>
<dbReference type="PhylomeDB" id="Q6TXG9"/>
<dbReference type="TreeFam" id="TF332725"/>
<dbReference type="PRO" id="PR:Q6TXG9"/>
<dbReference type="Proteomes" id="UP000002494">
    <property type="component" value="Chromosome 1"/>
</dbReference>
<dbReference type="Bgee" id="ENSRNOG00000012641">
    <property type="expression patterns" value="Expressed in ovary and 20 other cell types or tissues"/>
</dbReference>
<dbReference type="ExpressionAtlas" id="Q6TXG9">
    <property type="expression patterns" value="baseline and differential"/>
</dbReference>
<dbReference type="GO" id="GO:0005634">
    <property type="term" value="C:nucleus"/>
    <property type="evidence" value="ECO:0000250"/>
    <property type="project" value="UniProtKB"/>
</dbReference>
<dbReference type="GO" id="GO:0032798">
    <property type="term" value="C:Swi5-Sfr1 complex"/>
    <property type="evidence" value="ECO:0000250"/>
    <property type="project" value="UniProtKB"/>
</dbReference>
<dbReference type="GO" id="GO:0003713">
    <property type="term" value="F:transcription coactivator activity"/>
    <property type="evidence" value="ECO:0000250"/>
    <property type="project" value="UniProtKB"/>
</dbReference>
<dbReference type="GO" id="GO:0071391">
    <property type="term" value="P:cellular response to estrogen stimulus"/>
    <property type="evidence" value="ECO:0000266"/>
    <property type="project" value="RGD"/>
</dbReference>
<dbReference type="GO" id="GO:0000724">
    <property type="term" value="P:double-strand break repair via homologous recombination"/>
    <property type="evidence" value="ECO:0000250"/>
    <property type="project" value="UniProtKB"/>
</dbReference>
<dbReference type="GO" id="GO:0045893">
    <property type="term" value="P:positive regulation of DNA-templated transcription"/>
    <property type="evidence" value="ECO:0000250"/>
    <property type="project" value="UniProtKB"/>
</dbReference>
<dbReference type="Gene3D" id="6.10.140.1020">
    <property type="match status" value="1"/>
</dbReference>
<dbReference type="InterPro" id="IPR042429">
    <property type="entry name" value="SFR1"/>
</dbReference>
<dbReference type="InterPro" id="IPR018468">
    <property type="entry name" value="SFR1/Mei5"/>
</dbReference>
<dbReference type="PANTHER" id="PTHR28643">
    <property type="entry name" value="SWI5-DEPENDENT RECOMBINATION DNA REPAIR PROTEIN 1 HOMOLOG"/>
    <property type="match status" value="1"/>
</dbReference>
<dbReference type="PANTHER" id="PTHR28643:SF1">
    <property type="entry name" value="SWI5-DEPENDENT RECOMBINATION DNA REPAIR PROTEIN 1 HOMOLOG"/>
    <property type="match status" value="1"/>
</dbReference>
<dbReference type="Pfam" id="PF10376">
    <property type="entry name" value="Mei5"/>
    <property type="match status" value="1"/>
</dbReference>
<feature type="chain" id="PRO_0000406975" description="Swi5-dependent recombination DNA repair protein 1 homolog">
    <location>
        <begin position="1"/>
        <end position="251"/>
    </location>
</feature>
<feature type="region of interest" description="Disordered" evidence="4">
    <location>
        <begin position="88"/>
        <end position="150"/>
    </location>
</feature>
<feature type="coiled-coil region" evidence="3">
    <location>
        <begin position="149"/>
        <end position="202"/>
    </location>
</feature>
<feature type="compositionally biased region" description="Basic and acidic residues" evidence="4">
    <location>
        <begin position="99"/>
        <end position="135"/>
    </location>
</feature>
<feature type="compositionally biased region" description="Polar residues" evidence="4">
    <location>
        <begin position="136"/>
        <end position="146"/>
    </location>
</feature>
<feature type="modified residue" description="Phosphoserine" evidence="2">
    <location>
        <position position="27"/>
    </location>
</feature>
<feature type="modified residue" description="Phosphoserine" evidence="1">
    <location>
        <position position="72"/>
    </location>
</feature>
<keyword id="KW-0175">Coiled coil</keyword>
<keyword id="KW-0227">DNA damage</keyword>
<keyword id="KW-0234">DNA repair</keyword>
<keyword id="KW-0539">Nucleus</keyword>
<keyword id="KW-0597">Phosphoprotein</keyword>
<keyword id="KW-1185">Reference proteome</keyword>
<keyword id="KW-0804">Transcription</keyword>
<keyword id="KW-0805">Transcription regulation</keyword>
<comment type="function">
    <text evidence="1">Component of the SWI5-SFR1 complex, a complex required for double-strand break repair via homologous recombination. Acts as a transcriptional modulator for ESR1.</text>
</comment>
<comment type="subunit">
    <text evidence="1">Component of the SWI5-SFR1 complex. Interacts with RAD51; the interaction is weak (By similarity). Interacts with ESR1 in a ligand-independent and ligand-dependent manner (By similarity).</text>
</comment>
<comment type="subcellular location">
    <subcellularLocation>
        <location evidence="2">Nucleus</location>
    </subcellularLocation>
</comment>
<comment type="similarity">
    <text evidence="5">Belongs to the SFR1/MEI5 family.</text>
</comment>
<organism>
    <name type="scientific">Rattus norvegicus</name>
    <name type="common">Rat</name>
    <dbReference type="NCBI Taxonomy" id="10116"/>
    <lineage>
        <taxon>Eukaryota</taxon>
        <taxon>Metazoa</taxon>
        <taxon>Chordata</taxon>
        <taxon>Craniata</taxon>
        <taxon>Vertebrata</taxon>
        <taxon>Euteleostomi</taxon>
        <taxon>Mammalia</taxon>
        <taxon>Eutheria</taxon>
        <taxon>Euarchontoglires</taxon>
        <taxon>Glires</taxon>
        <taxon>Rodentia</taxon>
        <taxon>Myomorpha</taxon>
        <taxon>Muroidea</taxon>
        <taxon>Muridae</taxon>
        <taxon>Murinae</taxon>
        <taxon>Rattus</taxon>
    </lineage>
</organism>
<name>SFR1_RAT</name>
<protein>
    <recommendedName>
        <fullName>Swi5-dependent recombination DNA repair protein 1 homolog</fullName>
    </recommendedName>
    <alternativeName>
        <fullName>Liver regeneration-related protein LRRGT00030</fullName>
    </alternativeName>
    <alternativeName>
        <fullName>Meiosis protein 5 homolog</fullName>
    </alternativeName>
</protein>
<proteinExistence type="evidence at transcript level"/>
<evidence type="ECO:0000250" key="1">
    <source>
        <dbReference type="UniProtKB" id="Q86XK3"/>
    </source>
</evidence>
<evidence type="ECO:0000250" key="2">
    <source>
        <dbReference type="UniProtKB" id="Q8BP27"/>
    </source>
</evidence>
<evidence type="ECO:0000255" key="3"/>
<evidence type="ECO:0000256" key="4">
    <source>
        <dbReference type="SAM" id="MobiDB-lite"/>
    </source>
</evidence>
<evidence type="ECO:0000305" key="5"/>